<reference key="1">
    <citation type="journal article" date="1991" name="J. Biochem.">
        <title>Amino acid sequence of the hemerythrin alpha subunit from Lingula unguis.</title>
        <authorList>
            <person name="Yano H."/>
            <person name="Satake K."/>
            <person name="Ueno Y."/>
            <person name="Kondo K."/>
            <person name="Tsugita A."/>
        </authorList>
    </citation>
    <scope>PROTEIN SEQUENCE</scope>
</reference>
<reference key="2">
    <citation type="journal article" date="1990" name="Protein Seq. Data Anal.">
        <title>Hemerythrin from Lingula unguis consists of two different subunits, alpha and beta.</title>
        <authorList>
            <person name="Satake K."/>
            <person name="Yugi M."/>
            <person name="Kamo M."/>
            <person name="Kihara H."/>
            <person name="Tsugita A."/>
        </authorList>
    </citation>
    <scope>PROTEIN SEQUENCE OF 1-41 AND 110-117</scope>
</reference>
<protein>
    <recommendedName>
        <fullName>Hemerythrin subunit alpha</fullName>
    </recommendedName>
</protein>
<accession>P22764</accession>
<name>HEMTA_LINAN</name>
<sequence length="117" mass="13905">VKVPEPFAWNESFATSYKNIDLEHRTLFNGLFALSEFNTRDQLLACKEVFVMHFRDEQGQMEKANYEHFEEHRGIHEGFLEKMGHWKAPVAQKDIKFGMEWLVNHIPTEDFKYKGKL</sequence>
<dbReference type="PIR" id="JX0184">
    <property type="entry name" value="JX0184"/>
</dbReference>
<dbReference type="SMR" id="P22764"/>
<dbReference type="InParanoid" id="P22764"/>
<dbReference type="Proteomes" id="UP000085678">
    <property type="component" value="Unplaced"/>
</dbReference>
<dbReference type="GO" id="GO:0005506">
    <property type="term" value="F:iron ion binding"/>
    <property type="evidence" value="ECO:0007669"/>
    <property type="project" value="InterPro"/>
</dbReference>
<dbReference type="GO" id="GO:0005344">
    <property type="term" value="F:oxygen carrier activity"/>
    <property type="evidence" value="ECO:0007669"/>
    <property type="project" value="UniProtKB-KW"/>
</dbReference>
<dbReference type="CDD" id="cd12107">
    <property type="entry name" value="Hemerythrin"/>
    <property type="match status" value="1"/>
</dbReference>
<dbReference type="Gene3D" id="1.20.120.50">
    <property type="entry name" value="Hemerythrin-like"/>
    <property type="match status" value="1"/>
</dbReference>
<dbReference type="InterPro" id="IPR002063">
    <property type="entry name" value="Haemerythrin"/>
</dbReference>
<dbReference type="InterPro" id="IPR016131">
    <property type="entry name" value="Haemerythrin_Fe_BS"/>
</dbReference>
<dbReference type="InterPro" id="IPR050669">
    <property type="entry name" value="Hemerythrin"/>
</dbReference>
<dbReference type="InterPro" id="IPR012312">
    <property type="entry name" value="Hemerythrin-like"/>
</dbReference>
<dbReference type="InterPro" id="IPR035938">
    <property type="entry name" value="Hemerythrin-like_sf"/>
</dbReference>
<dbReference type="InterPro" id="IPR012827">
    <property type="entry name" value="Hemerythrin_metal-bd"/>
</dbReference>
<dbReference type="NCBIfam" id="TIGR02481">
    <property type="entry name" value="hemeryth_dom"/>
    <property type="match status" value="1"/>
</dbReference>
<dbReference type="NCBIfam" id="TIGR00058">
    <property type="entry name" value="Hemerythrin"/>
    <property type="match status" value="1"/>
</dbReference>
<dbReference type="PANTHER" id="PTHR37164">
    <property type="entry name" value="BACTERIOHEMERYTHRIN"/>
    <property type="match status" value="1"/>
</dbReference>
<dbReference type="PANTHER" id="PTHR37164:SF1">
    <property type="entry name" value="BACTERIOHEMERYTHRIN"/>
    <property type="match status" value="1"/>
</dbReference>
<dbReference type="Pfam" id="PF01814">
    <property type="entry name" value="Hemerythrin"/>
    <property type="match status" value="1"/>
</dbReference>
<dbReference type="PIRSF" id="PIRSF002033">
    <property type="entry name" value="Hemerythrin"/>
    <property type="match status" value="1"/>
</dbReference>
<dbReference type="PRINTS" id="PR00186">
    <property type="entry name" value="HEMERYTHRIN"/>
</dbReference>
<dbReference type="SUPFAM" id="SSF47188">
    <property type="entry name" value="Hemerythrin-like"/>
    <property type="match status" value="1"/>
</dbReference>
<dbReference type="PROSITE" id="PS00550">
    <property type="entry name" value="HEMERYTHRINS"/>
    <property type="match status" value="1"/>
</dbReference>
<keyword id="KW-0903">Direct protein sequencing</keyword>
<keyword id="KW-0408">Iron</keyword>
<keyword id="KW-0479">Metal-binding</keyword>
<keyword id="KW-0561">Oxygen transport</keyword>
<keyword id="KW-1185">Reference proteome</keyword>
<keyword id="KW-0813">Transport</keyword>
<feature type="chain" id="PRO_0000191830" description="Hemerythrin subunit alpha">
    <location>
        <begin position="1"/>
        <end position="117"/>
    </location>
</feature>
<feature type="binding site" evidence="1">
    <location>
        <position position="24"/>
    </location>
    <ligand>
        <name>Fe cation</name>
        <dbReference type="ChEBI" id="CHEBI:24875"/>
        <label>1</label>
    </ligand>
</feature>
<feature type="binding site" evidence="1">
    <location>
        <position position="53"/>
    </location>
    <ligand>
        <name>Fe cation</name>
        <dbReference type="ChEBI" id="CHEBI:24875"/>
        <label>1</label>
    </ligand>
</feature>
<feature type="binding site" evidence="1">
    <location>
        <position position="57"/>
    </location>
    <ligand>
        <name>Fe cation</name>
        <dbReference type="ChEBI" id="CHEBI:24875"/>
        <label>1</label>
    </ligand>
</feature>
<feature type="binding site" evidence="1">
    <location>
        <position position="57"/>
    </location>
    <ligand>
        <name>Fe cation</name>
        <dbReference type="ChEBI" id="CHEBI:24875"/>
        <label>2</label>
    </ligand>
</feature>
<feature type="binding site" evidence="1">
    <location>
        <position position="72"/>
    </location>
    <ligand>
        <name>Fe cation</name>
        <dbReference type="ChEBI" id="CHEBI:24875"/>
        <label>2</label>
    </ligand>
</feature>
<feature type="binding site" evidence="1">
    <location>
        <position position="76"/>
    </location>
    <ligand>
        <name>Fe cation</name>
        <dbReference type="ChEBI" id="CHEBI:24875"/>
        <label>2</label>
    </ligand>
</feature>
<feature type="binding site" evidence="1">
    <location>
        <position position="105"/>
    </location>
    <ligand>
        <name>Fe cation</name>
        <dbReference type="ChEBI" id="CHEBI:24875"/>
        <label>2</label>
    </ligand>
</feature>
<feature type="binding site" evidence="1">
    <location>
        <position position="110"/>
    </location>
    <ligand>
        <name>Fe cation</name>
        <dbReference type="ChEBI" id="CHEBI:24875"/>
        <label>1</label>
    </ligand>
</feature>
<feature type="binding site" evidence="1">
    <location>
        <position position="110"/>
    </location>
    <ligand>
        <name>Fe cation</name>
        <dbReference type="ChEBI" id="CHEBI:24875"/>
        <label>2</label>
    </ligand>
</feature>
<feature type="sequence conflict" description="In Ref. 2; AA sequence." evidence="2" ref="2">
    <original>K</original>
    <variation>H</variation>
    <location>
        <position position="112"/>
    </location>
</feature>
<proteinExistence type="evidence at protein level"/>
<evidence type="ECO:0000250" key="1">
    <source>
        <dbReference type="UniProtKB" id="P02244"/>
    </source>
</evidence>
<evidence type="ECO:0000305" key="2"/>
<comment type="function">
    <text>Hemerythrin is a respiratory protein in blood cells of certain marine worms. The oxygen-binding site in each chain contains two iron atoms.</text>
</comment>
<comment type="subunit">
    <text>Octamer composed of two types of chains: alpha and beta.</text>
</comment>
<comment type="similarity">
    <text evidence="2">Belongs to the hemerythrin family.</text>
</comment>
<organism>
    <name type="scientific">Lingula anatina</name>
    <name type="common">Brachiopod</name>
    <name type="synonym">Lingula unguis</name>
    <dbReference type="NCBI Taxonomy" id="7574"/>
    <lineage>
        <taxon>Eukaryota</taxon>
        <taxon>Metazoa</taxon>
        <taxon>Spiralia</taxon>
        <taxon>Lophotrochozoa</taxon>
        <taxon>Brachiopoda</taxon>
        <taxon>Linguliformea</taxon>
        <taxon>Lingulata</taxon>
        <taxon>Lingulida</taxon>
        <taxon>Linguloidea</taxon>
        <taxon>Lingulidae</taxon>
        <taxon>Lingula</taxon>
    </lineage>
</organism>